<name>CSOSA_HALNC</name>
<evidence type="ECO:0000255" key="1">
    <source>
        <dbReference type="PROSITE-ProRule" id="PRU01278"/>
    </source>
</evidence>
<evidence type="ECO:0000269" key="2">
    <source>
    </source>
</evidence>
<evidence type="ECO:0000269" key="3">
    <source>
    </source>
</evidence>
<evidence type="ECO:0000269" key="4">
    <source>
    </source>
</evidence>
<evidence type="ECO:0000269" key="5">
    <source>
    </source>
</evidence>
<evidence type="ECO:0000269" key="6">
    <source>
    </source>
</evidence>
<evidence type="ECO:0000269" key="7">
    <source>
    </source>
</evidence>
<evidence type="ECO:0000269" key="8">
    <source>
    </source>
</evidence>
<evidence type="ECO:0000269" key="9">
    <source>
    </source>
</evidence>
<evidence type="ECO:0000269" key="10">
    <source>
    </source>
</evidence>
<evidence type="ECO:0000269" key="11">
    <source>
    </source>
</evidence>
<evidence type="ECO:0000269" key="12">
    <source ref="5"/>
</evidence>
<evidence type="ECO:0000303" key="13">
    <source>
    </source>
</evidence>
<evidence type="ECO:0000303" key="14">
    <source>
    </source>
</evidence>
<evidence type="ECO:0000303" key="15">
    <source>
    </source>
</evidence>
<evidence type="ECO:0000305" key="16"/>
<evidence type="ECO:0000305" key="17">
    <source>
    </source>
</evidence>
<evidence type="ECO:0000305" key="18">
    <source>
    </source>
</evidence>
<evidence type="ECO:0000305" key="19">
    <source>
    </source>
</evidence>
<evidence type="ECO:0000305" key="20">
    <source>
    </source>
</evidence>
<evidence type="ECO:0007744" key="21">
    <source>
        <dbReference type="PDB" id="2EWH"/>
    </source>
</evidence>
<evidence type="ECO:0007744" key="22">
    <source>
        <dbReference type="PDB" id="2G13"/>
    </source>
</evidence>
<evidence type="ECO:0007829" key="23">
    <source>
        <dbReference type="PDB" id="2EWH"/>
    </source>
</evidence>
<evidence type="ECO:0007829" key="24">
    <source>
        <dbReference type="PDB" id="8B11"/>
    </source>
</evidence>
<organism>
    <name type="scientific">Halothiobacillus neapolitanus (strain ATCC 23641 / c2)</name>
    <name type="common">Thiobacillus neapolitanus</name>
    <dbReference type="NCBI Taxonomy" id="555778"/>
    <lineage>
        <taxon>Bacteria</taxon>
        <taxon>Pseudomonadati</taxon>
        <taxon>Pseudomonadota</taxon>
        <taxon>Gammaproteobacteria</taxon>
        <taxon>Chromatiales</taxon>
        <taxon>Halothiobacillaceae</taxon>
        <taxon>Halothiobacillus</taxon>
    </lineage>
</organism>
<gene>
    <name evidence="15" type="primary">csoS1A</name>
    <name evidence="14" type="synonym">csoS1</name>
    <name type="ordered locus">Hneap_0915</name>
</gene>
<protein>
    <recommendedName>
        <fullName evidence="13">Major carboxysome shell protein CsoS1A</fullName>
    </recommendedName>
</protein>
<dbReference type="EMBL" id="AF038430">
    <property type="protein sequence ID" value="AAC32556.1"/>
    <property type="molecule type" value="Genomic_DNA"/>
</dbReference>
<dbReference type="EMBL" id="CP001801">
    <property type="protein sequence ID" value="ACX95758.1"/>
    <property type="molecule type" value="Genomic_DNA"/>
</dbReference>
<dbReference type="PIR" id="S49415">
    <property type="entry name" value="S49415"/>
</dbReference>
<dbReference type="RefSeq" id="WP_012823794.1">
    <property type="nucleotide sequence ID" value="NC_013422.1"/>
</dbReference>
<dbReference type="PDB" id="2EWH">
    <property type="method" value="X-ray"/>
    <property type="resolution" value="1.40 A"/>
    <property type="chains" value="A=1-98"/>
</dbReference>
<dbReference type="PDB" id="2G13">
    <property type="method" value="X-ray"/>
    <property type="resolution" value="1.61 A"/>
    <property type="chains" value="A=1-98"/>
</dbReference>
<dbReference type="PDB" id="7CKB">
    <property type="method" value="EM"/>
    <property type="resolution" value="3.24 A"/>
    <property type="chains" value="B0/B1/B2/B3/B4/B5/B6/B7/B8/B9/BA/BB/BC/BD/BE/BF/BG/BH/BI/BJ/BK/BL/BM/BN/BO/BP/BQ/BR/BS/BT=1-98"/>
</dbReference>
<dbReference type="PDB" id="7CKC">
    <property type="method" value="EM"/>
    <property type="resolution" value="2.90 A"/>
    <property type="chains" value="B0/B1/B2/B3/B4/B5/B6/B7/B8/B9/BA/BB/BC/BD/BE/BF/BG/BH/BI/BJ/BK/BL/BM/BN/BO/BP/BQ/BR/BS/BT=1-98"/>
</dbReference>
<dbReference type="PDB" id="8B0Y">
    <property type="method" value="EM"/>
    <property type="resolution" value="2.79 A"/>
    <property type="chains" value="C/F=1-98"/>
</dbReference>
<dbReference type="PDB" id="8B11">
    <property type="method" value="EM"/>
    <property type="resolution" value="2.52 A"/>
    <property type="chains" value="C/D/E=1-98"/>
</dbReference>
<dbReference type="PDB" id="8B12">
    <property type="method" value="EM"/>
    <property type="resolution" value="1.86 A"/>
    <property type="chains" value="A/B/C/D/E/F/H/I=1-98"/>
</dbReference>
<dbReference type="PDB" id="8YVC">
    <property type="method" value="EM"/>
    <property type="resolution" value="3.04 A"/>
    <property type="chains" value="C/D/E/F/G/H/I/J/K/L/M/N/O/P/Q/R/S/T=1-98"/>
</dbReference>
<dbReference type="PDB" id="8YVD">
    <property type="method" value="EM"/>
    <property type="resolution" value="2.75 A"/>
    <property type="chains" value="A/B/C/D/E/F/G/H/I/J/K/L/M/N/O=1-98"/>
</dbReference>
<dbReference type="PDB" id="8YVE">
    <property type="method" value="EM"/>
    <property type="resolution" value="2.30 A"/>
    <property type="chains" value="A/B/C/D/E/F/N/R=1-98"/>
</dbReference>
<dbReference type="PDB" id="8YVF">
    <property type="method" value="EM"/>
    <property type="resolution" value="2.99 A"/>
    <property type="chains" value="0/2/3/5/6/7/8/9/A/A1/B/C/D/E/F/G/H/I/J/K/L/M/N/O/P/Q/R/S/T/U=1-98"/>
</dbReference>
<dbReference type="PDB" id="8YVI">
    <property type="method" value="EM"/>
    <property type="resolution" value="2.93 A"/>
    <property type="chains" value="A/B/C/D/E/F/G/I/J/K/L/M=1-98"/>
</dbReference>
<dbReference type="PDB" id="8YXU">
    <property type="method" value="X-ray"/>
    <property type="resolution" value="2.10 A"/>
    <property type="chains" value="A/B=1-98"/>
</dbReference>
<dbReference type="PDBsum" id="2EWH"/>
<dbReference type="PDBsum" id="2G13"/>
<dbReference type="PDBsum" id="7CKB"/>
<dbReference type="PDBsum" id="7CKC"/>
<dbReference type="PDBsum" id="8B0Y"/>
<dbReference type="PDBsum" id="8B11"/>
<dbReference type="PDBsum" id="8B12"/>
<dbReference type="PDBsum" id="8YVC"/>
<dbReference type="PDBsum" id="8YVD"/>
<dbReference type="PDBsum" id="8YVE"/>
<dbReference type="PDBsum" id="8YVF"/>
<dbReference type="PDBsum" id="8YVI"/>
<dbReference type="PDBsum" id="8YXU"/>
<dbReference type="EMDB" id="EMD-15798"/>
<dbReference type="EMDB" id="EMD-15799"/>
<dbReference type="EMDB" id="EMD-15801"/>
<dbReference type="EMDB" id="EMD-30384"/>
<dbReference type="EMDB" id="EMD-30385"/>
<dbReference type="EMDB" id="EMD-39596"/>
<dbReference type="EMDB" id="EMD-39597"/>
<dbReference type="EMDB" id="EMD-39598"/>
<dbReference type="EMDB" id="EMD-39599"/>
<dbReference type="EMDB" id="EMD-39601"/>
<dbReference type="SMR" id="P45689"/>
<dbReference type="DIP" id="DIP-29435N"/>
<dbReference type="STRING" id="555778.Hneap_0915"/>
<dbReference type="KEGG" id="hna:Hneap_0915"/>
<dbReference type="eggNOG" id="COG4577">
    <property type="taxonomic scope" value="Bacteria"/>
</dbReference>
<dbReference type="HOGENOM" id="CLU_064903_5_3_6"/>
<dbReference type="OrthoDB" id="9812608at2"/>
<dbReference type="EvolutionaryTrace" id="P45689"/>
<dbReference type="Proteomes" id="UP000009102">
    <property type="component" value="Chromosome"/>
</dbReference>
<dbReference type="GO" id="GO:0031470">
    <property type="term" value="C:carboxysome"/>
    <property type="evidence" value="ECO:0000314"/>
    <property type="project" value="UniProtKB"/>
</dbReference>
<dbReference type="GO" id="GO:0043886">
    <property type="term" value="F:structural constituent of carboxysome shell"/>
    <property type="evidence" value="ECO:0000314"/>
    <property type="project" value="UniProtKB"/>
</dbReference>
<dbReference type="GO" id="GO:0015977">
    <property type="term" value="P:carbon fixation"/>
    <property type="evidence" value="ECO:0007669"/>
    <property type="project" value="UniProtKB-KW"/>
</dbReference>
<dbReference type="CDD" id="cd07058">
    <property type="entry name" value="BMC_CsoS1"/>
    <property type="match status" value="1"/>
</dbReference>
<dbReference type="Gene3D" id="3.30.70.1710">
    <property type="match status" value="1"/>
</dbReference>
<dbReference type="InterPro" id="IPR020808">
    <property type="entry name" value="Bact_microcomp_CS"/>
</dbReference>
<dbReference type="InterPro" id="IPR000249">
    <property type="entry name" value="BMC_dom"/>
</dbReference>
<dbReference type="InterPro" id="IPR050575">
    <property type="entry name" value="BMC_shell"/>
</dbReference>
<dbReference type="InterPro" id="IPR037233">
    <property type="entry name" value="CcmK-like_sf"/>
</dbReference>
<dbReference type="InterPro" id="IPR044872">
    <property type="entry name" value="CcmK/CsoS1_BMC"/>
</dbReference>
<dbReference type="PANTHER" id="PTHR33941:SF11">
    <property type="entry name" value="BACTERIAL MICROCOMPARTMENT SHELL PROTEIN PDUJ"/>
    <property type="match status" value="1"/>
</dbReference>
<dbReference type="PANTHER" id="PTHR33941">
    <property type="entry name" value="PROPANEDIOL UTILIZATION PROTEIN PDUA"/>
    <property type="match status" value="1"/>
</dbReference>
<dbReference type="Pfam" id="PF00936">
    <property type="entry name" value="BMC"/>
    <property type="match status" value="1"/>
</dbReference>
<dbReference type="SMART" id="SM00877">
    <property type="entry name" value="BMC"/>
    <property type="match status" value="1"/>
</dbReference>
<dbReference type="SUPFAM" id="SSF143414">
    <property type="entry name" value="CcmK-like"/>
    <property type="match status" value="1"/>
</dbReference>
<dbReference type="PROSITE" id="PS01139">
    <property type="entry name" value="BMC_1"/>
    <property type="match status" value="1"/>
</dbReference>
<dbReference type="PROSITE" id="PS51930">
    <property type="entry name" value="BMC_2"/>
    <property type="match status" value="1"/>
</dbReference>
<accession>P45689</accession>
<accession>D0KZ85</accession>
<comment type="function">
    <text evidence="2 3 11 12 17 20">The major shell protein of the carboxysome, a polyhedral inclusion where RuBisCO (ribulose bisphosphate carboxylase, ccbL-ccbS) is sequestered (PubMed:16535117, PubMed:7934888). Assembles into hexamers which make sheets that form the facets of the polyhedral carboxysome (PubMed:17518518). The shell probably limits the diffusion of CO(2) into and out of the carboxysome (Probable). Molecular modeling shows the central pore of this protein is selectively permeable to anions such as HCO(3) rather than CO(2) or O(2) (Probable). There are estimated to be 2970 CsoS1A/CsoS1C proteins per carboxysome (the proteins differ by only 1 residue) (Ref.5).</text>
</comment>
<comment type="function">
    <text evidence="6 10">Unlike beta-carboxysomes, alpha-carboxysomes (Cb) can form without cargo protein. CsoS2 is essential for Cb formation and is also capable of targeting foreign proteins to the Cb. The Cb shell assembles with the aid of CsoS2; CsoS1A, CsoS1B and CsoS1C form the majority of the shell while CsoS4A and CsoS4B form vertices. CsoS1D forms pseudohexamers that probably control metabolite flux into and out of the shell.</text>
</comment>
<comment type="subunit">
    <text evidence="3 8 18">Homohexamer with a small central pore; the concave side is mostly positive electrostatic potential, whereas the convex side is mostly negative electrostatic potential (PubMed:17518518). Forms a CsoS2-CsoS1-RuBisCO complex (Probable). Interacts with the N-terminus (residues 1-136) of RuBisCO (CbbL) (PubMed:30305640).</text>
</comment>
<comment type="subcellular location">
    <subcellularLocation>
        <location evidence="4 11 19">Carboxysome</location>
    </subcellularLocation>
    <text evidence="3 4 12">This bacterium makes alpha-type carboxysomes.</text>
</comment>
<comment type="domain">
    <text evidence="3">The tight homohexamer forms a pore with an opening of about 4 Angstroms in diameter which is positively charged.</text>
</comment>
<comment type="disruption phenotype">
    <text evidence="2 9">Does not grow in ambient air, has a wild-type growth rate in 5% CO(2), called a high-CO(2) requiring phenotype, hcr. Fewer carboxysomes are present, RuBisCO is found to be soluble rather than in the carboxysome. Required for growth in ambient air (PubMed:31406332).</text>
</comment>
<comment type="biotechnology">
    <text evidence="5 7 8 10">Expression of 10 genes for alpha-carboxysome (Cb) proteins (cbbL-cbbS-csoS2-csoS3-csoS4A-csoS4B-csoS1C-csoS1A-csoS1B-csoS1D) in E.coli generates compartments that resemble Cb, contain RuBisCO and have its catalytic activity, showing it is possible to make artificial, functional Cb using these 10 genes. Cargo proteins can be targeted to these organelles (PubMed:22184212, PubMed:30305640). Artificial Cb assembly in E.coli requires csoS2-csoS4A-csoS4B-csoS1C-csoS1A-csoS1B-csoS1D (but not the gene for carbonic anhydrase, csoS3). Targeting proteins to the organelle requires at least one of the CsoS2 C-repeats; 3 repeats gives the best localization. A nanoreactor of the Cb shell proteins has been engineered which generates H(2) using a ferredoxin-hydrogenase fusion (AC P07839-Q9FYU1) and a flavodoxin/ferredoxin--NADP reductase (AC A0A0K3QZA5) targeted separately to the Cb; the hydrogenase has first to be matured and activated by HydGXEF (AC Q8EAH9, Q8EAH8, Q8EAH7 and Q8EAH6 respectively). Encapsulation increases H(2) production about 20% during anaerobic growth, and over 4-fold more during aerobic growth (PubMed:33116131). When this gene is expressed in S.elongatus PCC 7942 it colocalizes with its beta-carboxysomes, suggesting there a range of modular possibilites for the carboxysome constituent proteins. These experiments open the door to generating carboxysomes in plant cells to increase their photosynthesis and productivity, as well as tailoring bacterial microcompartments to specific metabolic needs and molecule delivery.</text>
</comment>
<comment type="similarity">
    <text evidence="16">Belongs to the bacterial microcompartments protein family. CsoS1 subfamily.</text>
</comment>
<feature type="initiator methionine" description="Removed" evidence="11">
    <location>
        <position position="1"/>
    </location>
</feature>
<feature type="chain" id="PRO_0000201512" description="Major carboxysome shell protein CsoS1A">
    <location>
        <begin position="2"/>
        <end position="98"/>
    </location>
</feature>
<feature type="domain" description="BMC" evidence="1">
    <location>
        <begin position="8"/>
        <end position="93"/>
    </location>
</feature>
<feature type="strand" evidence="23">
    <location>
        <begin position="8"/>
        <end position="16"/>
    </location>
</feature>
<feature type="helix" evidence="23">
    <location>
        <begin position="17"/>
        <end position="30"/>
    </location>
</feature>
<feature type="strand" evidence="23">
    <location>
        <begin position="31"/>
        <end position="42"/>
    </location>
</feature>
<feature type="strand" evidence="23">
    <location>
        <begin position="45"/>
        <end position="52"/>
    </location>
</feature>
<feature type="helix" evidence="23">
    <location>
        <begin position="54"/>
        <end position="68"/>
    </location>
</feature>
<feature type="strand" evidence="24">
    <location>
        <begin position="69"/>
        <end position="71"/>
    </location>
</feature>
<feature type="strand" evidence="23">
    <location>
        <begin position="75"/>
        <end position="83"/>
    </location>
</feature>
<feature type="helix" evidence="23">
    <location>
        <begin position="86"/>
        <end position="89"/>
    </location>
</feature>
<proteinExistence type="evidence at protein level"/>
<reference key="1">
    <citation type="journal article" date="1994" name="Mol. Microbiol.">
        <title>Isolation and characterization of a carboxysome shell gene from Thiobacillus neapolitanus.</title>
        <authorList>
            <person name="English R.S."/>
            <person name="Lorbach S.C."/>
            <person name="Qin X."/>
            <person name="Shively J.M."/>
        </authorList>
    </citation>
    <scope>NUCLEOTIDE SEQUENCE [GENOMIC DNA]</scope>
    <scope>PROTEIN SEQUENCE OF 2-18</scope>
    <scope>FUNCTION</scope>
    <scope>SUBCELLULAR LOCATION</scope>
    <source>
        <strain>ATCC 23641 / c2</strain>
    </source>
</reference>
<reference key="2">
    <citation type="journal article" date="1998" name="J. Bacteriol.">
        <title>Insertion mutation of the form I cbbL gene encoding ribulose bisphosphate carboxylase/oxygenase (RuBisCO) in Thiobacillus neapolitanus results in expression of form II RuBisCO, loss of carboxysomes, and an increased CO2 requirement for growth.</title>
        <authorList>
            <person name="Baker S.H."/>
            <person name="Jin S."/>
            <person name="Aldrich H.C."/>
            <person name="Howard G.T."/>
            <person name="Shively J.M."/>
        </authorList>
    </citation>
    <scope>SEQUENCE REVISION TO 69-98</scope>
    <source>
        <strain>ATCC 23641 / c2</strain>
    </source>
</reference>
<reference key="3">
    <citation type="submission" date="2009-10" db="EMBL/GenBank/DDBJ databases">
        <title>Complete sequence of Halothiobacillus neapolitanus c2.</title>
        <authorList>
            <consortium name="US DOE Joint Genome Institute"/>
            <person name="Lucas S."/>
            <person name="Copeland A."/>
            <person name="Lapidus A."/>
            <person name="Glavina del Rio T."/>
            <person name="Tice H."/>
            <person name="Bruce D."/>
            <person name="Goodwin L."/>
            <person name="Pitluck S."/>
            <person name="Davenport K."/>
            <person name="Brettin T."/>
            <person name="Detter J.C."/>
            <person name="Han C."/>
            <person name="Tapia R."/>
            <person name="Larimer F."/>
            <person name="Land M."/>
            <person name="Hauser L."/>
            <person name="Kyrpides N."/>
            <person name="Mikhailova N."/>
            <person name="Kerfeld C."/>
            <person name="Cannon G."/>
            <person name="Heinhort S."/>
        </authorList>
    </citation>
    <scope>NUCLEOTIDE SEQUENCE [LARGE SCALE GENOMIC DNA]</scope>
    <source>
        <strain>ATCC 23641 / c2</strain>
    </source>
</reference>
<reference key="4">
    <citation type="journal article" date="1995" name="Appl. Environ. Microbiol.">
        <title>Use of Electroporation To Generate a Thiobacillus neapolitanus Carboxysome Mutant.</title>
        <authorList>
            <person name="English R.S."/>
            <person name="Jin S."/>
            <person name="Shively J.M."/>
        </authorList>
    </citation>
    <scope>FUNCTION</scope>
    <scope>DISRUPTION PHENOTYPE</scope>
</reference>
<reference key="5">
    <citation type="book" date="2006" name="Microbiology Monographs">
        <title>Carboxysomes and Carboxysome-like Inclusions.</title>
        <editorList>
            <person name="Shively J.M."/>
        </editorList>
        <authorList>
            <person name="Heinhorst S."/>
            <person name="Cannon G.C."/>
            <person name="Shively J.M."/>
        </authorList>
    </citation>
    <scope>FUNCTION</scope>
    <scope>PROTEIN ABUNDANCE</scope>
    <scope>SUBCELLULAR LOCATION</scope>
</reference>
<reference key="6">
    <citation type="journal article" date="2008" name="J. Biol. Chem.">
        <title>CO2 fixation kinetics of Halothiobacillus neapolitanus mutant carboxysomes lacking carbonic anhydrase suggest the shell acts as a diffusional barrier for CO2.</title>
        <authorList>
            <person name="Dou Z."/>
            <person name="Heinhorst S."/>
            <person name="Williams E.B."/>
            <person name="Murin C.D."/>
            <person name="Shively J.M."/>
            <person name="Cannon G.C."/>
        </authorList>
    </citation>
    <scope>FUNCTION</scope>
    <scope>SUBCELLULAR LOCATION</scope>
    <source>
        <strain>ATCC 23641 / c2</strain>
    </source>
</reference>
<reference key="7">
    <citation type="journal article" date="2012" name="Proc. Natl. Acad. Sci. U.S.A.">
        <title>Modularity of a carbon-fixing protein organelle.</title>
        <authorList>
            <person name="Bonacci W."/>
            <person name="Teng P.K."/>
            <person name="Afonso B."/>
            <person name="Niederholtmeyer H."/>
            <person name="Grob P."/>
            <person name="Silver P.A."/>
            <person name="Savage D.F."/>
        </authorList>
    </citation>
    <scope>BIOTECHNOLOGY</scope>
    <source>
        <strain>ATCC 23641 / c2</strain>
    </source>
</reference>
<reference key="8">
    <citation type="journal article" date="2015" name="Life">
        <title>Advances in Understanding Carboxysome Assembly in Prochlorococcus and Synechococcus Implicate CsoS2 as a Critical Component.</title>
        <authorList>
            <person name="Cai F."/>
            <person name="Dou Z."/>
            <person name="Bernstein S.L."/>
            <person name="Leverenz R."/>
            <person name="Williams E.B."/>
            <person name="Heinhorst S."/>
            <person name="Shively J."/>
            <person name="Cannon G.C."/>
            <person name="Kerfeld C.A."/>
        </authorList>
    </citation>
    <scope>ASSEMBLY</scope>
    <scope>SUBUNIT</scope>
    <source>
        <strain>ATCC 23641 / c2</strain>
    </source>
</reference>
<reference key="9">
    <citation type="journal article" date="2018" name="Front. Plant Sci.">
        <title>Engineering and Modulating Functional Cyanobacterial CO2-Fixing Organelles.</title>
        <authorList>
            <person name="Fang Y."/>
            <person name="Huang F."/>
            <person name="Faulkner M."/>
            <person name="Jiang Q."/>
            <person name="Dykes G.F."/>
            <person name="Yang M."/>
            <person name="Liu L.N."/>
        </authorList>
    </citation>
    <scope>BIOTECHNOLOGY</scope>
</reference>
<reference key="10">
    <citation type="journal article" date="2018" name="J. Phys. Chem. B">
        <title>Selective Permeability of Carboxysome Shell Pores to Anionic Molecules.</title>
        <authorList>
            <person name="Mahinthichaichan P."/>
            <person name="Morris D.M."/>
            <person name="Wang Y."/>
            <person name="Jensen G.J."/>
            <person name="Tajkhorshid E."/>
        </authorList>
    </citation>
    <scope>FUNCTION</scope>
    <source>
        <strain>ATCC 23641 / c2</strain>
    </source>
</reference>
<reference key="11">
    <citation type="journal article" date="2018" name="Sci. Rep.">
        <title>Deciphering molecular details in the assembly of alpha-type carboxysome.</title>
        <authorList>
            <person name="Liu Y."/>
            <person name="He X."/>
            <person name="Lim W."/>
            <person name="Mueller J."/>
            <person name="Lawrie J."/>
            <person name="Kramer L."/>
            <person name="Guo J."/>
            <person name="Niu W."/>
        </authorList>
    </citation>
    <scope>INTERACTION WITH CBBL</scope>
    <scope>BIOTECHNOLOGY</scope>
    <source>
        <strain>ATCC 23641 / c2</strain>
    </source>
</reference>
<reference key="12">
    <citation type="journal article" date="2019" name="Nat. Microbiol.">
        <title>DABs are inorganic carbon pumps found throughout prokaryotic phyla.</title>
        <authorList>
            <person name="Desmarais J.J."/>
            <person name="Flamholz A.I."/>
            <person name="Blikstad C."/>
            <person name="Dugan E.J."/>
            <person name="Laughlin T.G."/>
            <person name="Oltrogge L.M."/>
            <person name="Chen A.W."/>
            <person name="Wetmore K."/>
            <person name="Diamond S."/>
            <person name="Wang J.Y."/>
            <person name="Savage D.F."/>
        </authorList>
    </citation>
    <scope>DISRUPTION PHENOTYPE</scope>
    <source>
        <strain>ATCC 23641 / c2</strain>
    </source>
</reference>
<reference key="13">
    <citation type="journal article" date="2020" name="Nat. Commun.">
        <title>Reprogramming bacterial protein organelles as a nanoreactor for hydrogen production.</title>
        <authorList>
            <person name="Li T."/>
            <person name="Jiang Q."/>
            <person name="Huang J."/>
            <person name="Aitchison C.M."/>
            <person name="Huang F."/>
            <person name="Yang M."/>
            <person name="Dykes G.F."/>
            <person name="He H.L."/>
            <person name="Wang Q."/>
            <person name="Sprick R.S."/>
            <person name="Cooper A.I."/>
            <person name="Liu L.N."/>
        </authorList>
    </citation>
    <scope>CARBOXYSOME ASSEMBLY</scope>
    <scope>BIOTECHNOLOGY</scope>
</reference>
<reference evidence="21 22" key="14">
    <citation type="journal article" date="2007" name="PLoS Biol.">
        <title>Structural analysis of CsoS1A and the protein shell of the Halothiobacillus neapolitanus carboxysome.</title>
        <authorList>
            <person name="Tsai Y."/>
            <person name="Sawaya M.R."/>
            <person name="Cannon G.C."/>
            <person name="Cai F."/>
            <person name="Williams E.B."/>
            <person name="Heinhorst S."/>
            <person name="Kerfeld C.A."/>
            <person name="Yeates T.O."/>
        </authorList>
    </citation>
    <scope>X-RAY CRYSTALLOGRAPHY (1.40 ANGSTROMS)</scope>
    <scope>FUNCTION</scope>
    <scope>SUBUNIT</scope>
    <scope>DOMAIN</scope>
</reference>
<keyword id="KW-0002">3D-structure</keyword>
<keyword id="KW-1283">Bacterial microcompartment</keyword>
<keyword id="KW-0120">Carbon dioxide fixation</keyword>
<keyword id="KW-1282">Carboxysome</keyword>
<keyword id="KW-0903">Direct protein sequencing</keyword>
<keyword id="KW-1185">Reference proteome</keyword>
<sequence length="98" mass="9963">MADVTGIALGMIETRGLVPAIEAADAMTKAAEVRLVGRQFVGGGYVTVLVRGETGAVNAAVRAGADACERVGDGLVAAHIIARVHSEVENILPKAPQA</sequence>